<evidence type="ECO:0000255" key="1">
    <source>
        <dbReference type="HAMAP-Rule" id="MF_00040"/>
    </source>
</evidence>
<protein>
    <recommendedName>
        <fullName evidence="1">Ribosome-recycling factor</fullName>
        <shortName evidence="1">RRF</shortName>
    </recommendedName>
    <alternativeName>
        <fullName evidence="1">Ribosome-releasing factor</fullName>
    </alternativeName>
</protein>
<proteinExistence type="inferred from homology"/>
<organism>
    <name type="scientific">Corynebacterium kroppenstedtii (strain DSM 44385 / JCM 11950 / CIP 105744 / CCUG 35717)</name>
    <dbReference type="NCBI Taxonomy" id="645127"/>
    <lineage>
        <taxon>Bacteria</taxon>
        <taxon>Bacillati</taxon>
        <taxon>Actinomycetota</taxon>
        <taxon>Actinomycetes</taxon>
        <taxon>Mycobacteriales</taxon>
        <taxon>Corynebacteriaceae</taxon>
        <taxon>Corynebacterium</taxon>
    </lineage>
</organism>
<name>RRF_CORK4</name>
<reference key="1">
    <citation type="journal article" date="2008" name="J. Biotechnol.">
        <title>Ultrafast pyrosequencing of Corynebacterium kroppenstedtii DSM44385 revealed insights into the physiology of a lipophilic corynebacterium that lacks mycolic acids.</title>
        <authorList>
            <person name="Tauch A."/>
            <person name="Schneider J."/>
            <person name="Szczepanowski R."/>
            <person name="Tilker A."/>
            <person name="Viehoever P."/>
            <person name="Gartemann K.-H."/>
            <person name="Arnold W."/>
            <person name="Blom J."/>
            <person name="Brinkrolf K."/>
            <person name="Brune I."/>
            <person name="Goetker S."/>
            <person name="Weisshaar B."/>
            <person name="Goesmann A."/>
            <person name="Droege M."/>
            <person name="Puehler A."/>
        </authorList>
    </citation>
    <scope>NUCLEOTIDE SEQUENCE [LARGE SCALE GENOMIC DNA]</scope>
    <source>
        <strain>DSM 44385 / JCM 11950 / CIP 105744 / CCUG 35717</strain>
    </source>
</reference>
<accession>C4LJA6</accession>
<comment type="function">
    <text evidence="1">Responsible for the release of ribosomes from messenger RNA at the termination of protein biosynthesis. May increase the efficiency of translation by recycling ribosomes from one round of translation to another.</text>
</comment>
<comment type="subcellular location">
    <subcellularLocation>
        <location evidence="1">Cytoplasm</location>
    </subcellularLocation>
</comment>
<comment type="similarity">
    <text evidence="1">Belongs to the RRF family.</text>
</comment>
<feature type="chain" id="PRO_1000202092" description="Ribosome-recycling factor">
    <location>
        <begin position="1"/>
        <end position="185"/>
    </location>
</feature>
<gene>
    <name evidence="1" type="primary">frr</name>
    <name type="ordered locus">ckrop_1166</name>
</gene>
<keyword id="KW-0963">Cytoplasm</keyword>
<keyword id="KW-0648">Protein biosynthesis</keyword>
<keyword id="KW-1185">Reference proteome</keyword>
<sequence>MIDDTLLESEERMTQSVEYAREDLTTIRTGRANPSMFNGVQAEYYGVMTPITQMATISVPEPRMLLIKPYEPSIMNAIENAIRNSDLGVNPTNDGQVLRVTVPQLTEERRKEMVRLAKSKGEDARIAIRNIRRKGMDELKRIQKDGEAGEDEVQAAEKELDKTTHEYVSQVDKLIEAKEKELMEV</sequence>
<dbReference type="EMBL" id="CP001620">
    <property type="protein sequence ID" value="ACR17911.1"/>
    <property type="molecule type" value="Genomic_DNA"/>
</dbReference>
<dbReference type="RefSeq" id="WP_012731798.1">
    <property type="nucleotide sequence ID" value="NC_012704.1"/>
</dbReference>
<dbReference type="SMR" id="C4LJA6"/>
<dbReference type="STRING" id="645127.ckrop_1166"/>
<dbReference type="GeneID" id="92726051"/>
<dbReference type="KEGG" id="ckp:ckrop_1166"/>
<dbReference type="eggNOG" id="COG0233">
    <property type="taxonomic scope" value="Bacteria"/>
</dbReference>
<dbReference type="HOGENOM" id="CLU_073981_2_0_11"/>
<dbReference type="OrthoDB" id="9804006at2"/>
<dbReference type="Proteomes" id="UP000001473">
    <property type="component" value="Chromosome"/>
</dbReference>
<dbReference type="GO" id="GO:0005737">
    <property type="term" value="C:cytoplasm"/>
    <property type="evidence" value="ECO:0007669"/>
    <property type="project" value="UniProtKB-SubCell"/>
</dbReference>
<dbReference type="GO" id="GO:0043023">
    <property type="term" value="F:ribosomal large subunit binding"/>
    <property type="evidence" value="ECO:0007669"/>
    <property type="project" value="TreeGrafter"/>
</dbReference>
<dbReference type="GO" id="GO:0006415">
    <property type="term" value="P:translational termination"/>
    <property type="evidence" value="ECO:0007669"/>
    <property type="project" value="UniProtKB-UniRule"/>
</dbReference>
<dbReference type="CDD" id="cd00520">
    <property type="entry name" value="RRF"/>
    <property type="match status" value="1"/>
</dbReference>
<dbReference type="FunFam" id="1.10.132.20:FF:000001">
    <property type="entry name" value="Ribosome-recycling factor"/>
    <property type="match status" value="1"/>
</dbReference>
<dbReference type="FunFam" id="3.30.1360.40:FF:000001">
    <property type="entry name" value="Ribosome-recycling factor"/>
    <property type="match status" value="1"/>
</dbReference>
<dbReference type="Gene3D" id="3.30.1360.40">
    <property type="match status" value="1"/>
</dbReference>
<dbReference type="Gene3D" id="1.10.132.20">
    <property type="entry name" value="Ribosome-recycling factor"/>
    <property type="match status" value="1"/>
</dbReference>
<dbReference type="HAMAP" id="MF_00040">
    <property type="entry name" value="RRF"/>
    <property type="match status" value="1"/>
</dbReference>
<dbReference type="InterPro" id="IPR002661">
    <property type="entry name" value="Ribosome_recyc_fac"/>
</dbReference>
<dbReference type="InterPro" id="IPR023584">
    <property type="entry name" value="Ribosome_recyc_fac_dom"/>
</dbReference>
<dbReference type="InterPro" id="IPR036191">
    <property type="entry name" value="RRF_sf"/>
</dbReference>
<dbReference type="NCBIfam" id="TIGR00496">
    <property type="entry name" value="frr"/>
    <property type="match status" value="1"/>
</dbReference>
<dbReference type="PANTHER" id="PTHR20982:SF3">
    <property type="entry name" value="MITOCHONDRIAL RIBOSOME RECYCLING FACTOR PSEUDO 1"/>
    <property type="match status" value="1"/>
</dbReference>
<dbReference type="PANTHER" id="PTHR20982">
    <property type="entry name" value="RIBOSOME RECYCLING FACTOR"/>
    <property type="match status" value="1"/>
</dbReference>
<dbReference type="Pfam" id="PF01765">
    <property type="entry name" value="RRF"/>
    <property type="match status" value="1"/>
</dbReference>
<dbReference type="SUPFAM" id="SSF55194">
    <property type="entry name" value="Ribosome recycling factor, RRF"/>
    <property type="match status" value="1"/>
</dbReference>